<dbReference type="EMBL" id="AF041068">
    <property type="protein sequence ID" value="AAC12868.1"/>
    <property type="molecule type" value="mRNA"/>
</dbReference>
<dbReference type="PIR" id="T10815">
    <property type="entry name" value="T10815"/>
</dbReference>
<dbReference type="SMR" id="O64981"/>
<dbReference type="eggNOG" id="KOG0651">
    <property type="taxonomic scope" value="Eukaryota"/>
</dbReference>
<dbReference type="GO" id="GO:0009570">
    <property type="term" value="C:chloroplast stroma"/>
    <property type="evidence" value="ECO:0007669"/>
    <property type="project" value="UniProtKB-SubCell"/>
</dbReference>
<dbReference type="GO" id="GO:0009579">
    <property type="term" value="C:thylakoid"/>
    <property type="evidence" value="ECO:0007669"/>
    <property type="project" value="TreeGrafter"/>
</dbReference>
<dbReference type="GO" id="GO:0005524">
    <property type="term" value="F:ATP binding"/>
    <property type="evidence" value="ECO:0007669"/>
    <property type="project" value="UniProtKB-KW"/>
</dbReference>
<dbReference type="GO" id="GO:0016887">
    <property type="term" value="F:ATP hydrolysis activity"/>
    <property type="evidence" value="ECO:0007669"/>
    <property type="project" value="InterPro"/>
</dbReference>
<dbReference type="GO" id="GO:0046863">
    <property type="term" value="F:ribulose-1,5-bisphosphate carboxylase/oxygenase activator activity"/>
    <property type="evidence" value="ECO:0007669"/>
    <property type="project" value="TreeGrafter"/>
</dbReference>
<dbReference type="FunFam" id="1.10.8.1070:FF:000001">
    <property type="entry name" value="Ribulose bisphosphate carboxylase/oxygenase activase, chloroplastic"/>
    <property type="match status" value="1"/>
</dbReference>
<dbReference type="FunFam" id="3.40.50.300:FF:000258">
    <property type="entry name" value="Ribulose bisphosphate carboxylase/oxygenase activase, chloroplastic"/>
    <property type="match status" value="1"/>
</dbReference>
<dbReference type="Gene3D" id="1.10.8.1070">
    <property type="match status" value="1"/>
</dbReference>
<dbReference type="Gene3D" id="3.40.50.300">
    <property type="entry name" value="P-loop containing nucleotide triphosphate hydrolases"/>
    <property type="match status" value="1"/>
</dbReference>
<dbReference type="InterPro" id="IPR003959">
    <property type="entry name" value="ATPase_AAA_core"/>
</dbReference>
<dbReference type="InterPro" id="IPR027417">
    <property type="entry name" value="P-loop_NTPase"/>
</dbReference>
<dbReference type="InterPro" id="IPR044960">
    <property type="entry name" value="RCA-like"/>
</dbReference>
<dbReference type="InterPro" id="IPR048571">
    <property type="entry name" value="RuBisCO_activase_AAA_helical"/>
</dbReference>
<dbReference type="PANTHER" id="PTHR32429">
    <property type="match status" value="1"/>
</dbReference>
<dbReference type="PANTHER" id="PTHR32429:SF35">
    <property type="entry name" value="RIBULOSE BISPHOSPHATE CARBOXYLASE_OXYGENASE ACTIVASE, CHLOROPLASTIC"/>
    <property type="match status" value="1"/>
</dbReference>
<dbReference type="Pfam" id="PF00004">
    <property type="entry name" value="AAA"/>
    <property type="match status" value="1"/>
</dbReference>
<dbReference type="Pfam" id="PF21228">
    <property type="entry name" value="RuBisCO_activase_AAA_helical"/>
    <property type="match status" value="1"/>
</dbReference>
<dbReference type="SUPFAM" id="SSF52540">
    <property type="entry name" value="P-loop containing nucleoside triphosphate hydrolases"/>
    <property type="match status" value="1"/>
</dbReference>
<comment type="function">
    <text>Activation of RuBisCO (ribulose-1,5-bisphosphate carboxylase/oxygenase; EC 4.1.1.39) involves the ATP-dependent carboxylation of the epsilon-amino group of lysine leading to a carbamate structure.</text>
</comment>
<comment type="subcellular location">
    <subcellularLocation>
        <location>Plastid</location>
        <location>Chloroplast stroma</location>
    </subcellularLocation>
</comment>
<comment type="similarity">
    <text evidence="2">Belongs to the RuBisCO activase family.</text>
</comment>
<gene>
    <name type="primary">RCA1</name>
</gene>
<organism>
    <name type="scientific">Phaseolus vulgaris</name>
    <name type="common">Kidney bean</name>
    <name type="synonym">French bean</name>
    <dbReference type="NCBI Taxonomy" id="3885"/>
    <lineage>
        <taxon>Eukaryota</taxon>
        <taxon>Viridiplantae</taxon>
        <taxon>Streptophyta</taxon>
        <taxon>Embryophyta</taxon>
        <taxon>Tracheophyta</taxon>
        <taxon>Spermatophyta</taxon>
        <taxon>Magnoliopsida</taxon>
        <taxon>eudicotyledons</taxon>
        <taxon>Gunneridae</taxon>
        <taxon>Pentapetalae</taxon>
        <taxon>rosids</taxon>
        <taxon>fabids</taxon>
        <taxon>Fabales</taxon>
        <taxon>Fabaceae</taxon>
        <taxon>Papilionoideae</taxon>
        <taxon>50 kb inversion clade</taxon>
        <taxon>NPAAA clade</taxon>
        <taxon>indigoferoid/millettioid clade</taxon>
        <taxon>Phaseoleae</taxon>
        <taxon>Phaseolus</taxon>
    </lineage>
</organism>
<keyword id="KW-0067">ATP-binding</keyword>
<keyword id="KW-0150">Chloroplast</keyword>
<keyword id="KW-0547">Nucleotide-binding</keyword>
<keyword id="KW-0934">Plastid</keyword>
<keyword id="KW-0809">Transit peptide</keyword>
<reference key="1">
    <citation type="online journal article" date="1998" name="Plant Gene Register">
        <title>Cloning and sequencing of a Phaseolus vulgaris cDNA encoding Rubisco activase.</title>
        <authorList>
            <person name="Ryan J.E."/>
            <person name="Andralojc P.J."/>
            <person name="Willis A.C."/>
            <person name="Gutteridge S."/>
            <person name="Parry M.A.J."/>
        </authorList>
        <locator>PGR98-044</locator>
    </citation>
    <scope>NUCLEOTIDE SEQUENCE [MRNA]</scope>
    <source>
        <strain>cv. Tendergreen</strain>
        <tissue>Leaf</tissue>
    </source>
</reference>
<proteinExistence type="evidence at transcript level"/>
<accession>O64981</accession>
<feature type="transit peptide" description="Chloroplast" evidence="1">
    <location>
        <begin position="1"/>
        <end status="unknown"/>
    </location>
</feature>
<feature type="chain" id="PRO_0000030240" description="Ribulose bisphosphate carboxylase/oxygenase activase, chloroplastic">
    <location>
        <begin status="unknown"/>
        <end position="441"/>
    </location>
</feature>
<feature type="binding site" evidence="1">
    <location>
        <begin position="167"/>
        <end position="174"/>
    </location>
    <ligand>
        <name>ATP</name>
        <dbReference type="ChEBI" id="CHEBI:30616"/>
    </ligand>
</feature>
<name>RCA_PHAVU</name>
<evidence type="ECO:0000255" key="1"/>
<evidence type="ECO:0000305" key="2"/>
<sequence>MAASLSTVGAVNRTLLNLNGSGGGASGPSSAFFGTSLKKVISSRVPNSKLTSGSFKIVAADKEIEETQQTEGDRWRGLAYDVSDDQQDITRGKGLVDSLFQAPMDAGTHYAVISSHKYLSAGLRQYNFDNIKDGFYIAPAFLDKLVVHIAKNFMTLPNIKVPLILGVWGGKGQGKSFQCELVFAKMGINPIMMSAGELESGNAGEPAKLIRQRYREASDLIKKGKMCVLFINDLDAGAGRLGGTTQYTVNNQMVNATLMNIADNPTNVQLPGMYNKEDNARVPIIVTGNDFSTLYAPLIRDGRMEKFYWAPTREDRIGVCKGIFRTDGVPEKDIVELVDKHPGQSIDFFGALRARVYDDEVRKWISGVGVDSVGKKLVNSKEGPPTFDQPKMTLDKLLLYASMLVQEQENVKRVQLADQYLNEAALGNANEDAIKSGSFFK</sequence>
<protein>
    <recommendedName>
        <fullName>Ribulose bisphosphate carboxylase/oxygenase activase, chloroplastic</fullName>
        <shortName>RA</shortName>
        <shortName>RuBisCO activase</shortName>
    </recommendedName>
</protein>